<name>E2AK1_SCHPO</name>
<reference key="1">
    <citation type="journal article" date="2002" name="Mol. Cell. Biol.">
        <title>Phosphorylation of eukaryotic initiation factor 2 by heme-regulated inhibitor kinase-related protein kinases in Schizosaccharomyces pombe is important for resistance to environmental stresses.</title>
        <authorList>
            <person name="Zhan K."/>
            <person name="Vattem K.M."/>
            <person name="Bauer B.N."/>
            <person name="Dever T.E."/>
            <person name="Chen J.-J."/>
            <person name="Wek R.C."/>
        </authorList>
    </citation>
    <scope>NUCLEOTIDE SEQUENCE [MRNA]</scope>
    <scope>FUNCTION</scope>
    <scope>INDUCTION</scope>
    <scope>AUTOPHOSPHORYLATION</scope>
    <scope>MUTAGENESIS OF LYS-253</scope>
    <source>
        <strain>SP223</strain>
    </source>
</reference>
<reference key="2">
    <citation type="journal article" date="2002" name="Nature">
        <title>The genome sequence of Schizosaccharomyces pombe.</title>
        <authorList>
            <person name="Wood V."/>
            <person name="Gwilliam R."/>
            <person name="Rajandream M.A."/>
            <person name="Lyne M.H."/>
            <person name="Lyne R."/>
            <person name="Stewart A."/>
            <person name="Sgouros J.G."/>
            <person name="Peat N."/>
            <person name="Hayles J."/>
            <person name="Baker S.G."/>
            <person name="Basham D."/>
            <person name="Bowman S."/>
            <person name="Brooks K."/>
            <person name="Brown D."/>
            <person name="Brown S."/>
            <person name="Chillingworth T."/>
            <person name="Churcher C.M."/>
            <person name="Collins M."/>
            <person name="Connor R."/>
            <person name="Cronin A."/>
            <person name="Davis P."/>
            <person name="Feltwell T."/>
            <person name="Fraser A."/>
            <person name="Gentles S."/>
            <person name="Goble A."/>
            <person name="Hamlin N."/>
            <person name="Harris D.E."/>
            <person name="Hidalgo J."/>
            <person name="Hodgson G."/>
            <person name="Holroyd S."/>
            <person name="Hornsby T."/>
            <person name="Howarth S."/>
            <person name="Huckle E.J."/>
            <person name="Hunt S."/>
            <person name="Jagels K."/>
            <person name="James K.D."/>
            <person name="Jones L."/>
            <person name="Jones M."/>
            <person name="Leather S."/>
            <person name="McDonald S."/>
            <person name="McLean J."/>
            <person name="Mooney P."/>
            <person name="Moule S."/>
            <person name="Mungall K.L."/>
            <person name="Murphy L.D."/>
            <person name="Niblett D."/>
            <person name="Odell C."/>
            <person name="Oliver K."/>
            <person name="O'Neil S."/>
            <person name="Pearson D."/>
            <person name="Quail M.A."/>
            <person name="Rabbinowitsch E."/>
            <person name="Rutherford K.M."/>
            <person name="Rutter S."/>
            <person name="Saunders D."/>
            <person name="Seeger K."/>
            <person name="Sharp S."/>
            <person name="Skelton J."/>
            <person name="Simmonds M.N."/>
            <person name="Squares R."/>
            <person name="Squares S."/>
            <person name="Stevens K."/>
            <person name="Taylor K."/>
            <person name="Taylor R.G."/>
            <person name="Tivey A."/>
            <person name="Walsh S.V."/>
            <person name="Warren T."/>
            <person name="Whitehead S."/>
            <person name="Woodward J.R."/>
            <person name="Volckaert G."/>
            <person name="Aert R."/>
            <person name="Robben J."/>
            <person name="Grymonprez B."/>
            <person name="Weltjens I."/>
            <person name="Vanstreels E."/>
            <person name="Rieger M."/>
            <person name="Schaefer M."/>
            <person name="Mueller-Auer S."/>
            <person name="Gabel C."/>
            <person name="Fuchs M."/>
            <person name="Duesterhoeft A."/>
            <person name="Fritzc C."/>
            <person name="Holzer E."/>
            <person name="Moestl D."/>
            <person name="Hilbert H."/>
            <person name="Borzym K."/>
            <person name="Langer I."/>
            <person name="Beck A."/>
            <person name="Lehrach H."/>
            <person name="Reinhardt R."/>
            <person name="Pohl T.M."/>
            <person name="Eger P."/>
            <person name="Zimmermann W."/>
            <person name="Wedler H."/>
            <person name="Wambutt R."/>
            <person name="Purnelle B."/>
            <person name="Goffeau A."/>
            <person name="Cadieu E."/>
            <person name="Dreano S."/>
            <person name="Gloux S."/>
            <person name="Lelaure V."/>
            <person name="Mottier S."/>
            <person name="Galibert F."/>
            <person name="Aves S.J."/>
            <person name="Xiang Z."/>
            <person name="Hunt C."/>
            <person name="Moore K."/>
            <person name="Hurst S.M."/>
            <person name="Lucas M."/>
            <person name="Rochet M."/>
            <person name="Gaillardin C."/>
            <person name="Tallada V.A."/>
            <person name="Garzon A."/>
            <person name="Thode G."/>
            <person name="Daga R.R."/>
            <person name="Cruzado L."/>
            <person name="Jimenez J."/>
            <person name="Sanchez M."/>
            <person name="del Rey F."/>
            <person name="Benito J."/>
            <person name="Dominguez A."/>
            <person name="Revuelta J.L."/>
            <person name="Moreno S."/>
            <person name="Armstrong J."/>
            <person name="Forsburg S.L."/>
            <person name="Cerutti L."/>
            <person name="Lowe T."/>
            <person name="McCombie W.R."/>
            <person name="Paulsen I."/>
            <person name="Potashkin J."/>
            <person name="Shpakovski G.V."/>
            <person name="Ussery D."/>
            <person name="Barrell B.G."/>
            <person name="Nurse P."/>
        </authorList>
    </citation>
    <scope>NUCLEOTIDE SEQUENCE [LARGE SCALE GENOMIC DNA]</scope>
    <source>
        <strain>972 / ATCC 24843</strain>
    </source>
</reference>
<organism>
    <name type="scientific">Schizosaccharomyces pombe (strain 972 / ATCC 24843)</name>
    <name type="common">Fission yeast</name>
    <dbReference type="NCBI Taxonomy" id="284812"/>
    <lineage>
        <taxon>Eukaryota</taxon>
        <taxon>Fungi</taxon>
        <taxon>Dikarya</taxon>
        <taxon>Ascomycota</taxon>
        <taxon>Taphrinomycotina</taxon>
        <taxon>Schizosaccharomycetes</taxon>
        <taxon>Schizosaccharomycetales</taxon>
        <taxon>Schizosaccharomycetaceae</taxon>
        <taxon>Schizosaccharomyces</taxon>
    </lineage>
</organism>
<dbReference type="EC" id="2.7.11.1"/>
<dbReference type="EMBL" id="AF536223">
    <property type="protein sequence ID" value="AAN04053.1"/>
    <property type="molecule type" value="mRNA"/>
</dbReference>
<dbReference type="EMBL" id="CU329670">
    <property type="protein sequence ID" value="CAB11253.1"/>
    <property type="molecule type" value="Genomic_DNA"/>
</dbReference>
<dbReference type="PIR" id="T38117">
    <property type="entry name" value="T38117"/>
</dbReference>
<dbReference type="RefSeq" id="NP_594738.1">
    <property type="nucleotide sequence ID" value="NM_001020166.2"/>
</dbReference>
<dbReference type="BioGRID" id="278222">
    <property type="interactions" value="26"/>
</dbReference>
<dbReference type="FunCoup" id="O13889">
    <property type="interactions" value="499"/>
</dbReference>
<dbReference type="STRING" id="284812.O13889"/>
<dbReference type="iPTMnet" id="O13889"/>
<dbReference type="PaxDb" id="4896-SPAC20G4.03c.1"/>
<dbReference type="EnsemblFungi" id="SPAC20G4.03c.1">
    <property type="protein sequence ID" value="SPAC20G4.03c.1:pep"/>
    <property type="gene ID" value="SPAC20G4.03c"/>
</dbReference>
<dbReference type="GeneID" id="2541728"/>
<dbReference type="KEGG" id="spo:2541728"/>
<dbReference type="PomBase" id="SPAC20G4.03c">
    <property type="gene designation" value="hri1"/>
</dbReference>
<dbReference type="VEuPathDB" id="FungiDB:SPAC20G4.03c"/>
<dbReference type="eggNOG" id="KOG1035">
    <property type="taxonomic scope" value="Eukaryota"/>
</dbReference>
<dbReference type="HOGENOM" id="CLU_000288_134_1_1"/>
<dbReference type="InParanoid" id="O13889"/>
<dbReference type="OMA" id="SSNMFRE"/>
<dbReference type="PhylomeDB" id="O13889"/>
<dbReference type="PRO" id="PR:O13889"/>
<dbReference type="Proteomes" id="UP000002485">
    <property type="component" value="Chromosome I"/>
</dbReference>
<dbReference type="GO" id="GO:0005737">
    <property type="term" value="C:cytoplasm"/>
    <property type="evidence" value="ECO:0000318"/>
    <property type="project" value="GO_Central"/>
</dbReference>
<dbReference type="GO" id="GO:0005829">
    <property type="term" value="C:cytosol"/>
    <property type="evidence" value="ECO:0007005"/>
    <property type="project" value="PomBase"/>
</dbReference>
<dbReference type="GO" id="GO:0005634">
    <property type="term" value="C:nucleus"/>
    <property type="evidence" value="ECO:0000318"/>
    <property type="project" value="GO_Central"/>
</dbReference>
<dbReference type="GO" id="GO:0005524">
    <property type="term" value="F:ATP binding"/>
    <property type="evidence" value="ECO:0000255"/>
    <property type="project" value="PomBase"/>
</dbReference>
<dbReference type="GO" id="GO:0004694">
    <property type="term" value="F:eukaryotic translation initiation factor 2alpha kinase activity"/>
    <property type="evidence" value="ECO:0000314"/>
    <property type="project" value="PomBase"/>
</dbReference>
<dbReference type="GO" id="GO:0106310">
    <property type="term" value="F:protein serine kinase activity"/>
    <property type="evidence" value="ECO:0007669"/>
    <property type="project" value="RHEA"/>
</dbReference>
<dbReference type="GO" id="GO:1990625">
    <property type="term" value="P:negative regulation of cytoplasmic translational initiation in response to stress"/>
    <property type="evidence" value="ECO:0000315"/>
    <property type="project" value="PomBase"/>
</dbReference>
<dbReference type="GO" id="GO:0023052">
    <property type="term" value="P:signaling"/>
    <property type="evidence" value="ECO:0000305"/>
    <property type="project" value="PomBase"/>
</dbReference>
<dbReference type="CDD" id="cd13996">
    <property type="entry name" value="STKc_EIF2AK"/>
    <property type="match status" value="1"/>
</dbReference>
<dbReference type="Gene3D" id="3.30.200.20">
    <property type="entry name" value="Phosphorylase Kinase, domain 1"/>
    <property type="match status" value="1"/>
</dbReference>
<dbReference type="Gene3D" id="1.10.510.10">
    <property type="entry name" value="Transferase(Phosphotransferase) domain 1"/>
    <property type="match status" value="1"/>
</dbReference>
<dbReference type="InterPro" id="IPR050339">
    <property type="entry name" value="CC_SR_Kinase"/>
</dbReference>
<dbReference type="InterPro" id="IPR054521">
    <property type="entry name" value="HRI2_3H"/>
</dbReference>
<dbReference type="InterPro" id="IPR011009">
    <property type="entry name" value="Kinase-like_dom_sf"/>
</dbReference>
<dbReference type="InterPro" id="IPR000719">
    <property type="entry name" value="Prot_kinase_dom"/>
</dbReference>
<dbReference type="InterPro" id="IPR017441">
    <property type="entry name" value="Protein_kinase_ATP_BS"/>
</dbReference>
<dbReference type="InterPro" id="IPR008271">
    <property type="entry name" value="Ser/Thr_kinase_AS"/>
</dbReference>
<dbReference type="PANTHER" id="PTHR11042:SF179">
    <property type="entry name" value="EUKARYOTIC TRANSLATION INITIATION FACTOR 2-ALPHA KINASE 1"/>
    <property type="match status" value="1"/>
</dbReference>
<dbReference type="PANTHER" id="PTHR11042">
    <property type="entry name" value="EUKARYOTIC TRANSLATION INITIATION FACTOR 2-ALPHA KINASE EIF2-ALPHA KINASE -RELATED"/>
    <property type="match status" value="1"/>
</dbReference>
<dbReference type="Pfam" id="PF22949">
    <property type="entry name" value="HRI2_3H"/>
    <property type="match status" value="1"/>
</dbReference>
<dbReference type="Pfam" id="PF00069">
    <property type="entry name" value="Pkinase"/>
    <property type="match status" value="2"/>
</dbReference>
<dbReference type="SMART" id="SM00220">
    <property type="entry name" value="S_TKc"/>
    <property type="match status" value="1"/>
</dbReference>
<dbReference type="SUPFAM" id="SSF56112">
    <property type="entry name" value="Protein kinase-like (PK-like)"/>
    <property type="match status" value="1"/>
</dbReference>
<dbReference type="PROSITE" id="PS00107">
    <property type="entry name" value="PROTEIN_KINASE_ATP"/>
    <property type="match status" value="1"/>
</dbReference>
<dbReference type="PROSITE" id="PS50011">
    <property type="entry name" value="PROTEIN_KINASE_DOM"/>
    <property type="match status" value="1"/>
</dbReference>
<dbReference type="PROSITE" id="PS00108">
    <property type="entry name" value="PROTEIN_KINASE_ST"/>
    <property type="match status" value="1"/>
</dbReference>
<accession>O13889</accession>
<proteinExistence type="evidence at protein level"/>
<protein>
    <recommendedName>
        <fullName>Eukaryotic translation initiation factor 2-alpha kinase 1</fullName>
        <ecNumber>2.7.11.1</ecNumber>
    </recommendedName>
    <alternativeName>
        <fullName>Heme-regulated eukaryotic initiation factor eIF-2-alpha kinase</fullName>
    </alternativeName>
    <alternativeName>
        <fullName>Heme-regulated inhibitor 1</fullName>
    </alternativeName>
</protein>
<comment type="function">
    <text evidence="3">Mediates down-regulation of protein synthesis in response to stress conditions by the phosphorylation of the alpha subunit of eIF-2 (tif211) on 'Ser-52'. Protein synthesis is inhibited at the level of initiation. Activity is inhibited in the presence of heme.</text>
</comment>
<comment type="catalytic activity">
    <reaction>
        <text>L-seryl-[protein] + ATP = O-phospho-L-seryl-[protein] + ADP + H(+)</text>
        <dbReference type="Rhea" id="RHEA:17989"/>
        <dbReference type="Rhea" id="RHEA-COMP:9863"/>
        <dbReference type="Rhea" id="RHEA-COMP:11604"/>
        <dbReference type="ChEBI" id="CHEBI:15378"/>
        <dbReference type="ChEBI" id="CHEBI:29999"/>
        <dbReference type="ChEBI" id="CHEBI:30616"/>
        <dbReference type="ChEBI" id="CHEBI:83421"/>
        <dbReference type="ChEBI" id="CHEBI:456216"/>
        <dbReference type="EC" id="2.7.11.1"/>
    </reaction>
</comment>
<comment type="catalytic activity">
    <reaction>
        <text>L-threonyl-[protein] + ATP = O-phospho-L-threonyl-[protein] + ADP + H(+)</text>
        <dbReference type="Rhea" id="RHEA:46608"/>
        <dbReference type="Rhea" id="RHEA-COMP:11060"/>
        <dbReference type="Rhea" id="RHEA-COMP:11605"/>
        <dbReference type="ChEBI" id="CHEBI:15378"/>
        <dbReference type="ChEBI" id="CHEBI:30013"/>
        <dbReference type="ChEBI" id="CHEBI:30616"/>
        <dbReference type="ChEBI" id="CHEBI:61977"/>
        <dbReference type="ChEBI" id="CHEBI:456216"/>
        <dbReference type="EC" id="2.7.11.1"/>
    </reaction>
</comment>
<comment type="induction">
    <text evidence="3">By heat shock and arsenic.</text>
</comment>
<comment type="PTM">
    <text>Autophosphorylated.</text>
</comment>
<comment type="similarity">
    <text evidence="1">Belongs to the protein kinase superfamily. Ser/Thr protein kinase family. GCN2 subfamily.</text>
</comment>
<keyword id="KW-0067">ATP-binding</keyword>
<keyword id="KW-0418">Kinase</keyword>
<keyword id="KW-0547">Nucleotide-binding</keyword>
<keyword id="KW-0597">Phosphoprotein</keyword>
<keyword id="KW-0652">Protein synthesis inhibitor</keyword>
<keyword id="KW-1185">Reference proteome</keyword>
<keyword id="KW-0723">Serine/threonine-protein kinase</keyword>
<keyword id="KW-0346">Stress response</keyword>
<keyword id="KW-0808">Transferase</keyword>
<evidence type="ECO:0000255" key="1">
    <source>
        <dbReference type="PROSITE-ProRule" id="PRU00159"/>
    </source>
</evidence>
<evidence type="ECO:0000255" key="2">
    <source>
        <dbReference type="PROSITE-ProRule" id="PRU10027"/>
    </source>
</evidence>
<evidence type="ECO:0000269" key="3">
    <source>
    </source>
</evidence>
<sequence>MLGTSTKCSKRDCNYAKENISRIMPTIGLGYKQNFEKKTADTQSSCKLLLVALLESFCKHSDQTPEQSKQMFLYVAHSLQNSGIIDFEFSEELEPIRNAYADSLHNLLSKAFRSTLPMSSTKDSKKSRYSSPDGVLAKTASFLSVLSDGGYEDDVMNVKPSVNVLSNRLNHLPVEALESCFPQTTLESSTFADFCEHKDGTGNLSFSNFDSFPTVQRSRYASDFEELELLGKGGYGSVYKARNKFDGVEYALKKIPLRLRSFSTSSNIFRESRTLARLNHPNVIRFFSSWVELLPSSEKQIEEEPLASADETLSQSADIDNFMFDMDTGLLQHTYPSSVQILFQEDSVADDLTPCYSTKNSTCNLTDLFKKEADQDYAESHDCSSTTSQVDTLGKLAPTKSASEMLLMDSFLSEREEDECSNIPSFDQQPLCLYIQMALCEETLEKHINRRNKHIHGVMSKGLRNCYILLFARILEGVLYLHDAMHLVHRDLKPRNIFLSSGVHSEPCSVCLPNFSDEDNVEVSNAYEPVNQRTLCVVPKIGDFGLVLSQSDNLEEGTNSSAESSFVGTSTYAAPELFSKHMRSVMNNNSSTDIYALGILFFELLYPFNTRMERASAIANLKKGIFPHDFLDSMPEEASLIRSMLSSSNKRPTAAQLLTSNLFHDLVVNELHVYQALLEDAEKRNNNLKAELNILRVLNPNYDC</sequence>
<gene>
    <name type="primary">hri1</name>
    <name type="ORF">SPAC20G4.03c</name>
</gene>
<feature type="chain" id="PRO_0000085949" description="Eukaryotic translation initiation factor 2-alpha kinase 1">
    <location>
        <begin position="1"/>
        <end position="704"/>
    </location>
</feature>
<feature type="domain" description="Protein kinase" evidence="1">
    <location>
        <begin position="224"/>
        <end position="667"/>
    </location>
</feature>
<feature type="active site" description="Proton acceptor" evidence="1 2">
    <location>
        <position position="491"/>
    </location>
</feature>
<feature type="binding site" evidence="1">
    <location>
        <begin position="230"/>
        <end position="238"/>
    </location>
    <ligand>
        <name>ATP</name>
        <dbReference type="ChEBI" id="CHEBI:30616"/>
    </ligand>
</feature>
<feature type="binding site">
    <location>
        <position position="253"/>
    </location>
    <ligand>
        <name>ATP</name>
        <dbReference type="ChEBI" id="CHEBI:30616"/>
    </ligand>
</feature>
<feature type="mutagenesis site" description="No activity." evidence="3">
    <original>K</original>
    <variation>M</variation>
    <location>
        <position position="253"/>
    </location>
</feature>